<reference key="1">
    <citation type="journal article" date="2000" name="Nature">
        <title>Sequence and analysis of chromosome 5 of the plant Arabidopsis thaliana.</title>
        <authorList>
            <person name="Tabata S."/>
            <person name="Kaneko T."/>
            <person name="Nakamura Y."/>
            <person name="Kotani H."/>
            <person name="Kato T."/>
            <person name="Asamizu E."/>
            <person name="Miyajima N."/>
            <person name="Sasamoto S."/>
            <person name="Kimura T."/>
            <person name="Hosouchi T."/>
            <person name="Kawashima K."/>
            <person name="Kohara M."/>
            <person name="Matsumoto M."/>
            <person name="Matsuno A."/>
            <person name="Muraki A."/>
            <person name="Nakayama S."/>
            <person name="Nakazaki N."/>
            <person name="Naruo K."/>
            <person name="Okumura S."/>
            <person name="Shinpo S."/>
            <person name="Takeuchi C."/>
            <person name="Wada T."/>
            <person name="Watanabe A."/>
            <person name="Yamada M."/>
            <person name="Yasuda M."/>
            <person name="Sato S."/>
            <person name="de la Bastide M."/>
            <person name="Huang E."/>
            <person name="Spiegel L."/>
            <person name="Gnoj L."/>
            <person name="O'Shaughnessy A."/>
            <person name="Preston R."/>
            <person name="Habermann K."/>
            <person name="Murray J."/>
            <person name="Johnson D."/>
            <person name="Rohlfing T."/>
            <person name="Nelson J."/>
            <person name="Stoneking T."/>
            <person name="Pepin K."/>
            <person name="Spieth J."/>
            <person name="Sekhon M."/>
            <person name="Armstrong J."/>
            <person name="Becker M."/>
            <person name="Belter E."/>
            <person name="Cordum H."/>
            <person name="Cordes M."/>
            <person name="Courtney L."/>
            <person name="Courtney W."/>
            <person name="Dante M."/>
            <person name="Du H."/>
            <person name="Edwards J."/>
            <person name="Fryman J."/>
            <person name="Haakensen B."/>
            <person name="Lamar E."/>
            <person name="Latreille P."/>
            <person name="Leonard S."/>
            <person name="Meyer R."/>
            <person name="Mulvaney E."/>
            <person name="Ozersky P."/>
            <person name="Riley A."/>
            <person name="Strowmatt C."/>
            <person name="Wagner-McPherson C."/>
            <person name="Wollam A."/>
            <person name="Yoakum M."/>
            <person name="Bell M."/>
            <person name="Dedhia N."/>
            <person name="Parnell L."/>
            <person name="Shah R."/>
            <person name="Rodriguez M."/>
            <person name="Hoon See L."/>
            <person name="Vil D."/>
            <person name="Baker J."/>
            <person name="Kirchoff K."/>
            <person name="Toth K."/>
            <person name="King L."/>
            <person name="Bahret A."/>
            <person name="Miller B."/>
            <person name="Marra M.A."/>
            <person name="Martienssen R."/>
            <person name="McCombie W.R."/>
            <person name="Wilson R.K."/>
            <person name="Murphy G."/>
            <person name="Bancroft I."/>
            <person name="Volckaert G."/>
            <person name="Wambutt R."/>
            <person name="Duesterhoeft A."/>
            <person name="Stiekema W."/>
            <person name="Pohl T."/>
            <person name="Entian K.-D."/>
            <person name="Terryn N."/>
            <person name="Hartley N."/>
            <person name="Bent E."/>
            <person name="Johnson S."/>
            <person name="Langham S.-A."/>
            <person name="McCullagh B."/>
            <person name="Robben J."/>
            <person name="Grymonprez B."/>
            <person name="Zimmermann W."/>
            <person name="Ramsperger U."/>
            <person name="Wedler H."/>
            <person name="Balke K."/>
            <person name="Wedler E."/>
            <person name="Peters S."/>
            <person name="van Staveren M."/>
            <person name="Dirkse W."/>
            <person name="Mooijman P."/>
            <person name="Klein Lankhorst R."/>
            <person name="Weitzenegger T."/>
            <person name="Bothe G."/>
            <person name="Rose M."/>
            <person name="Hauf J."/>
            <person name="Berneiser S."/>
            <person name="Hempel S."/>
            <person name="Feldpausch M."/>
            <person name="Lamberth S."/>
            <person name="Villarroel R."/>
            <person name="Gielen J."/>
            <person name="Ardiles W."/>
            <person name="Bents O."/>
            <person name="Lemcke K."/>
            <person name="Kolesov G."/>
            <person name="Mayer K.F.X."/>
            <person name="Rudd S."/>
            <person name="Schoof H."/>
            <person name="Schueller C."/>
            <person name="Zaccaria P."/>
            <person name="Mewes H.-W."/>
            <person name="Bevan M."/>
            <person name="Fransz P.F."/>
        </authorList>
    </citation>
    <scope>NUCLEOTIDE SEQUENCE [LARGE SCALE GENOMIC DNA]</scope>
    <source>
        <strain>cv. Columbia</strain>
    </source>
</reference>
<reference key="2">
    <citation type="journal article" date="2017" name="Plant J.">
        <title>Araport11: a complete reannotation of the Arabidopsis thaliana reference genome.</title>
        <authorList>
            <person name="Cheng C.Y."/>
            <person name="Krishnakumar V."/>
            <person name="Chan A.P."/>
            <person name="Thibaud-Nissen F."/>
            <person name="Schobel S."/>
            <person name="Town C.D."/>
        </authorList>
    </citation>
    <scope>GENOME REANNOTATION</scope>
    <source>
        <strain>cv. Columbia</strain>
    </source>
</reference>
<reference key="3">
    <citation type="submission" date="2004-01" db="EMBL/GenBank/DDBJ databases">
        <title>Arabidopsis ORF clones.</title>
        <authorList>
            <person name="Cheuk R.F."/>
            <person name="Chen H."/>
            <person name="Kim C.J."/>
            <person name="Shinn P."/>
            <person name="Ecker J.R."/>
        </authorList>
    </citation>
    <scope>NUCLEOTIDE SEQUENCE [LARGE SCALE MRNA]</scope>
    <source>
        <strain>cv. Columbia</strain>
    </source>
</reference>
<reference key="4">
    <citation type="submission" date="2006-07" db="EMBL/GenBank/DDBJ databases">
        <title>Large-scale analysis of RIKEN Arabidopsis full-length (RAFL) cDNAs.</title>
        <authorList>
            <person name="Totoki Y."/>
            <person name="Seki M."/>
            <person name="Ishida J."/>
            <person name="Nakajima M."/>
            <person name="Enju A."/>
            <person name="Kamiya A."/>
            <person name="Narusaka M."/>
            <person name="Shin-i T."/>
            <person name="Nakagawa M."/>
            <person name="Sakamoto N."/>
            <person name="Oishi K."/>
            <person name="Kohara Y."/>
            <person name="Kobayashi M."/>
            <person name="Toyoda A."/>
            <person name="Sakaki Y."/>
            <person name="Sakurai T."/>
            <person name="Iida K."/>
            <person name="Akiyama K."/>
            <person name="Satou M."/>
            <person name="Toyoda T."/>
            <person name="Konagaya A."/>
            <person name="Carninci P."/>
            <person name="Kawai J."/>
            <person name="Hayashizaki Y."/>
            <person name="Shinozaki K."/>
        </authorList>
    </citation>
    <scope>NUCLEOTIDE SEQUENCE [LARGE SCALE MRNA]</scope>
    <source>
        <strain>cv. Columbia</strain>
    </source>
</reference>
<reference key="5">
    <citation type="journal article" date="2001" name="Plant Physiol.">
        <title>The organization of cytoplasmic ribosomal protein genes in the Arabidopsis genome.</title>
        <authorList>
            <person name="Barakat A."/>
            <person name="Szick-Miranda K."/>
            <person name="Chang I.-F."/>
            <person name="Guyot R."/>
            <person name="Blanc G."/>
            <person name="Cooke R."/>
            <person name="Delseny M."/>
            <person name="Bailey-Serres J."/>
        </authorList>
    </citation>
    <scope>GENE FAMILY ORGANIZATION</scope>
    <scope>NOMENCLATURE</scope>
</reference>
<reference key="6">
    <citation type="journal article" date="2008" name="Plant Signal. Behav.">
        <title>Arabidopsis eIF3e interacts with subunits of the ribosome, Cop9 signalosome and proteasome.</title>
        <authorList>
            <person name="Paz-Aviram T."/>
            <person name="Yahalom A."/>
            <person name="Chamovitz D.A."/>
        </authorList>
    </citation>
    <scope>INTERACTION WITH TIF3E1</scope>
</reference>
<reference key="7">
    <citation type="journal article" date="2009" name="Plant Physiol.">
        <title>Large-scale Arabidopsis phosphoproteome profiling reveals novel chloroplast kinase substrates and phosphorylation networks.</title>
        <authorList>
            <person name="Reiland S."/>
            <person name="Messerli G."/>
            <person name="Baerenfaller K."/>
            <person name="Gerrits B."/>
            <person name="Endler A."/>
            <person name="Grossmann J."/>
            <person name="Gruissem W."/>
            <person name="Baginsky S."/>
        </authorList>
    </citation>
    <scope>PHOSPHORYLATION [LARGE SCALE ANALYSIS] AT SER-68</scope>
    <scope>IDENTIFICATION BY MASS SPECTROMETRY [LARGE SCALE ANALYSIS]</scope>
</reference>
<reference key="8">
    <citation type="journal article" date="2023" name="Plant Cell">
        <title>An updated nomenclature for plant ribosomal protein genes.</title>
        <authorList>
            <person name="Scarpin M.R."/>
            <person name="Busche M."/>
            <person name="Martinez R.E."/>
            <person name="Harper L.C."/>
            <person name="Reiser L."/>
            <person name="Szakonyi D."/>
            <person name="Merchante C."/>
            <person name="Lan T."/>
            <person name="Xiong W."/>
            <person name="Mo B."/>
            <person name="Tang G."/>
            <person name="Chen X."/>
            <person name="Bailey-Serres J."/>
            <person name="Browning K.S."/>
            <person name="Brunkard J.O."/>
        </authorList>
    </citation>
    <scope>NOMENCLATURE</scope>
</reference>
<sequence length="198" mass="23036">MVHVCYYRNYGKTFKGPRRPYEKERLDSELKLVGEYGLRNKRELWRVQYSLSRIRNAARDLLTLDEKSPRRIFEGEALLRRMNRYGLLDESQNKLDYVLALTVENFLERRLQTIVFKSGMAKSIHHSRVLIRQRHIRVGKQLVNIPSFMVRLDSQKHIDFALTSPFGGGRPGRVKRRNEKSASKKASGGGDADGDDEE</sequence>
<organism>
    <name type="scientific">Arabidopsis thaliana</name>
    <name type="common">Mouse-ear cress</name>
    <dbReference type="NCBI Taxonomy" id="3702"/>
    <lineage>
        <taxon>Eukaryota</taxon>
        <taxon>Viridiplantae</taxon>
        <taxon>Streptophyta</taxon>
        <taxon>Embryophyta</taxon>
        <taxon>Tracheophyta</taxon>
        <taxon>Spermatophyta</taxon>
        <taxon>Magnoliopsida</taxon>
        <taxon>eudicotyledons</taxon>
        <taxon>Gunneridae</taxon>
        <taxon>Pentapetalae</taxon>
        <taxon>rosids</taxon>
        <taxon>malvids</taxon>
        <taxon>Brassicales</taxon>
        <taxon>Brassicaceae</taxon>
        <taxon>Camelineae</taxon>
        <taxon>Arabidopsis</taxon>
    </lineage>
</organism>
<comment type="subunit">
    <text evidence="3">Binds to the translation initiation factors TIF3E1.</text>
</comment>
<comment type="alternative products">
    <event type="alternative splicing"/>
    <isoform>
        <id>Q9LXG1-1</id>
        <name>1</name>
        <sequence type="displayed"/>
    </isoform>
    <text>A number of isoforms are produced. According to EST sequences.</text>
</comment>
<comment type="similarity">
    <text evidence="5">Belongs to the universal ribosomal protein uS4 family.</text>
</comment>
<name>RS91_ARATH</name>
<feature type="chain" id="PRO_0000250186" description="Small ribosomal subunit protein uS4z">
    <location>
        <begin position="1"/>
        <end position="198"/>
    </location>
</feature>
<feature type="domain" description="S4 RNA-binding" evidence="1">
    <location>
        <begin position="109"/>
        <end position="180"/>
    </location>
</feature>
<feature type="region of interest" description="Disordered" evidence="2">
    <location>
        <begin position="163"/>
        <end position="198"/>
    </location>
</feature>
<feature type="modified residue" description="Phosphoserine" evidence="6">
    <location>
        <position position="68"/>
    </location>
</feature>
<evidence type="ECO:0000255" key="1">
    <source>
        <dbReference type="PROSITE-ProRule" id="PRU00182"/>
    </source>
</evidence>
<evidence type="ECO:0000256" key="2">
    <source>
        <dbReference type="SAM" id="MobiDB-lite"/>
    </source>
</evidence>
<evidence type="ECO:0000269" key="3">
    <source>
    </source>
</evidence>
<evidence type="ECO:0000303" key="4">
    <source>
    </source>
</evidence>
<evidence type="ECO:0000305" key="5"/>
<evidence type="ECO:0007744" key="6">
    <source>
    </source>
</evidence>
<dbReference type="EMBL" id="AL353993">
    <property type="protein sequence ID" value="CAB89330.1"/>
    <property type="molecule type" value="Genomic_DNA"/>
</dbReference>
<dbReference type="EMBL" id="CP002688">
    <property type="protein sequence ID" value="AED92128.1"/>
    <property type="molecule type" value="Genomic_DNA"/>
</dbReference>
<dbReference type="EMBL" id="BT010847">
    <property type="protein sequence ID" value="AAR24214.1"/>
    <property type="molecule type" value="mRNA"/>
</dbReference>
<dbReference type="EMBL" id="BT011315">
    <property type="protein sequence ID" value="AAR92351.1"/>
    <property type="molecule type" value="mRNA"/>
</dbReference>
<dbReference type="EMBL" id="AK228437">
    <property type="protein sequence ID" value="BAF00367.1"/>
    <property type="molecule type" value="mRNA"/>
</dbReference>
<dbReference type="PIR" id="T49955">
    <property type="entry name" value="T49955"/>
</dbReference>
<dbReference type="RefSeq" id="NP_197024.1">
    <molecule id="Q9LXG1-1"/>
    <property type="nucleotide sequence ID" value="NM_121524.5"/>
</dbReference>
<dbReference type="SMR" id="Q9LXG1"/>
<dbReference type="BioGRID" id="16649">
    <property type="interactions" value="161"/>
</dbReference>
<dbReference type="FunCoup" id="Q9LXG1">
    <property type="interactions" value="3265"/>
</dbReference>
<dbReference type="IntAct" id="Q9LXG1">
    <property type="interactions" value="8"/>
</dbReference>
<dbReference type="STRING" id="3702.Q9LXG1"/>
<dbReference type="iPTMnet" id="Q9LXG1"/>
<dbReference type="PaxDb" id="3702-AT5G15200.1"/>
<dbReference type="ProteomicsDB" id="226776">
    <molecule id="Q9LXG1-1"/>
</dbReference>
<dbReference type="EnsemblPlants" id="AT5G15200.1">
    <molecule id="Q9LXG1-1"/>
    <property type="protein sequence ID" value="AT5G15200.1"/>
    <property type="gene ID" value="AT5G15200"/>
</dbReference>
<dbReference type="GeneID" id="831372"/>
<dbReference type="Gramene" id="AT5G15200.1">
    <molecule id="Q9LXG1-1"/>
    <property type="protein sequence ID" value="AT5G15200.1"/>
    <property type="gene ID" value="AT5G15200"/>
</dbReference>
<dbReference type="KEGG" id="ath:AT5G15200"/>
<dbReference type="Araport" id="AT5G15200"/>
<dbReference type="TAIR" id="AT5G15200"/>
<dbReference type="eggNOG" id="KOG3301">
    <property type="taxonomic scope" value="Eukaryota"/>
</dbReference>
<dbReference type="HOGENOM" id="CLU_089738_0_1_1"/>
<dbReference type="InParanoid" id="Q9LXG1"/>
<dbReference type="OMA" id="HIRIRFR"/>
<dbReference type="OrthoDB" id="1065551at2759"/>
<dbReference type="PhylomeDB" id="Q9LXG1"/>
<dbReference type="CD-CODE" id="4299E36E">
    <property type="entry name" value="Nucleolus"/>
</dbReference>
<dbReference type="PRO" id="PR:Q9LXG1"/>
<dbReference type="Proteomes" id="UP000006548">
    <property type="component" value="Chromosome 5"/>
</dbReference>
<dbReference type="ExpressionAtlas" id="Q9LXG1">
    <property type="expression patterns" value="baseline and differential"/>
</dbReference>
<dbReference type="GO" id="GO:0009507">
    <property type="term" value="C:chloroplast"/>
    <property type="evidence" value="ECO:0007005"/>
    <property type="project" value="TAIR"/>
</dbReference>
<dbReference type="GO" id="GO:0022626">
    <property type="term" value="C:cytosolic ribosome"/>
    <property type="evidence" value="ECO:0007005"/>
    <property type="project" value="TAIR"/>
</dbReference>
<dbReference type="GO" id="GO:0022627">
    <property type="term" value="C:cytosolic small ribosomal subunit"/>
    <property type="evidence" value="ECO:0007005"/>
    <property type="project" value="TAIR"/>
</dbReference>
<dbReference type="GO" id="GO:0005730">
    <property type="term" value="C:nucleolus"/>
    <property type="evidence" value="ECO:0007005"/>
    <property type="project" value="TAIR"/>
</dbReference>
<dbReference type="GO" id="GO:0009505">
    <property type="term" value="C:plant-type cell wall"/>
    <property type="evidence" value="ECO:0007005"/>
    <property type="project" value="TAIR"/>
</dbReference>
<dbReference type="GO" id="GO:0000325">
    <property type="term" value="C:plant-type vacuole"/>
    <property type="evidence" value="ECO:0007005"/>
    <property type="project" value="TAIR"/>
</dbReference>
<dbReference type="GO" id="GO:0009506">
    <property type="term" value="C:plasmodesma"/>
    <property type="evidence" value="ECO:0007005"/>
    <property type="project" value="TAIR"/>
</dbReference>
<dbReference type="GO" id="GO:0009536">
    <property type="term" value="C:plastid"/>
    <property type="evidence" value="ECO:0007005"/>
    <property type="project" value="TAIR"/>
</dbReference>
<dbReference type="GO" id="GO:0003729">
    <property type="term" value="F:mRNA binding"/>
    <property type="evidence" value="ECO:0000314"/>
    <property type="project" value="TAIR"/>
</dbReference>
<dbReference type="GO" id="GO:0019843">
    <property type="term" value="F:rRNA binding"/>
    <property type="evidence" value="ECO:0007669"/>
    <property type="project" value="UniProtKB-KW"/>
</dbReference>
<dbReference type="GO" id="GO:0003735">
    <property type="term" value="F:structural constituent of ribosome"/>
    <property type="evidence" value="ECO:0000314"/>
    <property type="project" value="CAFA"/>
</dbReference>
<dbReference type="GO" id="GO:0006412">
    <property type="term" value="P:translation"/>
    <property type="evidence" value="ECO:0007669"/>
    <property type="project" value="InterPro"/>
</dbReference>
<dbReference type="CDD" id="cd00165">
    <property type="entry name" value="S4"/>
    <property type="match status" value="1"/>
</dbReference>
<dbReference type="FunFam" id="3.10.290.10:FF:000021">
    <property type="entry name" value="40S ribosomal protein S9"/>
    <property type="match status" value="1"/>
</dbReference>
<dbReference type="Gene3D" id="3.10.290.10">
    <property type="entry name" value="RNA-binding S4 domain"/>
    <property type="match status" value="1"/>
</dbReference>
<dbReference type="InterPro" id="IPR022801">
    <property type="entry name" value="Ribosomal_uS4"/>
</dbReference>
<dbReference type="InterPro" id="IPR018079">
    <property type="entry name" value="Ribosomal_uS4_CS"/>
</dbReference>
<dbReference type="InterPro" id="IPR005710">
    <property type="entry name" value="Ribosomal_uS4_euk/arc"/>
</dbReference>
<dbReference type="InterPro" id="IPR001912">
    <property type="entry name" value="Ribosomal_uS4_N"/>
</dbReference>
<dbReference type="InterPro" id="IPR002942">
    <property type="entry name" value="S4_RNA-bd"/>
</dbReference>
<dbReference type="InterPro" id="IPR036986">
    <property type="entry name" value="S4_RNA-bd_sf"/>
</dbReference>
<dbReference type="NCBIfam" id="NF003139">
    <property type="entry name" value="PRK04051.1"/>
    <property type="match status" value="1"/>
</dbReference>
<dbReference type="NCBIfam" id="TIGR01018">
    <property type="entry name" value="uS4_arch"/>
    <property type="match status" value="1"/>
</dbReference>
<dbReference type="PANTHER" id="PTHR11831">
    <property type="entry name" value="30S 40S RIBOSOMAL PROTEIN"/>
    <property type="match status" value="1"/>
</dbReference>
<dbReference type="PANTHER" id="PTHR11831:SF26">
    <property type="entry name" value="SMALL RIBOSOMAL SUBUNIT PROTEIN US4Z"/>
    <property type="match status" value="1"/>
</dbReference>
<dbReference type="Pfam" id="PF00163">
    <property type="entry name" value="Ribosomal_S4"/>
    <property type="match status" value="1"/>
</dbReference>
<dbReference type="Pfam" id="PF01479">
    <property type="entry name" value="S4"/>
    <property type="match status" value="1"/>
</dbReference>
<dbReference type="SMART" id="SM01390">
    <property type="entry name" value="Ribosomal_S4"/>
    <property type="match status" value="1"/>
</dbReference>
<dbReference type="SMART" id="SM00363">
    <property type="entry name" value="S4"/>
    <property type="match status" value="1"/>
</dbReference>
<dbReference type="SUPFAM" id="SSF55174">
    <property type="entry name" value="Alpha-L RNA-binding motif"/>
    <property type="match status" value="1"/>
</dbReference>
<dbReference type="PROSITE" id="PS00632">
    <property type="entry name" value="RIBOSOMAL_S4"/>
    <property type="match status" value="1"/>
</dbReference>
<dbReference type="PROSITE" id="PS50889">
    <property type="entry name" value="S4"/>
    <property type="match status" value="1"/>
</dbReference>
<accession>Q9LXG1</accession>
<gene>
    <name type="primary">RPS9B</name>
    <name type="ordered locus">At5g15200</name>
    <name type="ORF">F8M21_90</name>
</gene>
<keyword id="KW-0025">Alternative splicing</keyword>
<keyword id="KW-0597">Phosphoprotein</keyword>
<keyword id="KW-1185">Reference proteome</keyword>
<keyword id="KW-0687">Ribonucleoprotein</keyword>
<keyword id="KW-0689">Ribosomal protein</keyword>
<keyword id="KW-0694">RNA-binding</keyword>
<keyword id="KW-0699">rRNA-binding</keyword>
<protein>
    <recommendedName>
        <fullName evidence="4">Small ribosomal subunit protein uS4z</fullName>
    </recommendedName>
    <alternativeName>
        <fullName>40S ribosomal protein S9-1</fullName>
    </alternativeName>
</protein>
<proteinExistence type="evidence at protein level"/>